<accession>Q89KP9</accession>
<comment type="function">
    <text evidence="1">Catalyzes the NADPH-dependent rearrangement and reduction of 1-deoxy-D-xylulose-5-phosphate (DXP) to 2-C-methyl-D-erythritol 4-phosphate (MEP).</text>
</comment>
<comment type="catalytic activity">
    <reaction evidence="1">
        <text>2-C-methyl-D-erythritol 4-phosphate + NADP(+) = 1-deoxy-D-xylulose 5-phosphate + NADPH + H(+)</text>
        <dbReference type="Rhea" id="RHEA:13717"/>
        <dbReference type="ChEBI" id="CHEBI:15378"/>
        <dbReference type="ChEBI" id="CHEBI:57783"/>
        <dbReference type="ChEBI" id="CHEBI:57792"/>
        <dbReference type="ChEBI" id="CHEBI:58262"/>
        <dbReference type="ChEBI" id="CHEBI:58349"/>
        <dbReference type="EC" id="1.1.1.267"/>
    </reaction>
    <physiologicalReaction direction="right-to-left" evidence="1">
        <dbReference type="Rhea" id="RHEA:13719"/>
    </physiologicalReaction>
</comment>
<comment type="cofactor">
    <cofactor evidence="1">
        <name>Mg(2+)</name>
        <dbReference type="ChEBI" id="CHEBI:18420"/>
    </cofactor>
    <cofactor evidence="1">
        <name>Mn(2+)</name>
        <dbReference type="ChEBI" id="CHEBI:29035"/>
    </cofactor>
</comment>
<comment type="pathway">
    <text evidence="1">Isoprenoid biosynthesis; isopentenyl diphosphate biosynthesis via DXP pathway; isopentenyl diphosphate from 1-deoxy-D-xylulose 5-phosphate: step 1/6.</text>
</comment>
<comment type="similarity">
    <text evidence="1">Belongs to the DXR family.</text>
</comment>
<name>DXR_BRADU</name>
<gene>
    <name evidence="1" type="primary">dxr</name>
    <name type="ordered locus">bll4855</name>
</gene>
<feature type="chain" id="PRO_0000163621" description="1-deoxy-D-xylulose 5-phosphate reductoisomerase">
    <location>
        <begin position="1"/>
        <end position="407"/>
    </location>
</feature>
<feature type="binding site" evidence="1">
    <location>
        <position position="25"/>
    </location>
    <ligand>
        <name>NADPH</name>
        <dbReference type="ChEBI" id="CHEBI:57783"/>
    </ligand>
</feature>
<feature type="binding site" evidence="1">
    <location>
        <position position="26"/>
    </location>
    <ligand>
        <name>NADPH</name>
        <dbReference type="ChEBI" id="CHEBI:57783"/>
    </ligand>
</feature>
<feature type="binding site" evidence="1">
    <location>
        <position position="27"/>
    </location>
    <ligand>
        <name>NADPH</name>
        <dbReference type="ChEBI" id="CHEBI:57783"/>
    </ligand>
</feature>
<feature type="binding site" evidence="1">
    <location>
        <position position="28"/>
    </location>
    <ligand>
        <name>NADPH</name>
        <dbReference type="ChEBI" id="CHEBI:57783"/>
    </ligand>
</feature>
<feature type="binding site" evidence="1">
    <location>
        <position position="53"/>
    </location>
    <ligand>
        <name>NADPH</name>
        <dbReference type="ChEBI" id="CHEBI:57783"/>
    </ligand>
</feature>
<feature type="binding site" evidence="1">
    <location>
        <position position="136"/>
    </location>
    <ligand>
        <name>NADPH</name>
        <dbReference type="ChEBI" id="CHEBI:57783"/>
    </ligand>
</feature>
<feature type="binding site" evidence="1">
    <location>
        <position position="137"/>
    </location>
    <ligand>
        <name>1-deoxy-D-xylulose 5-phosphate</name>
        <dbReference type="ChEBI" id="CHEBI:57792"/>
    </ligand>
</feature>
<feature type="binding site" evidence="1">
    <location>
        <position position="138"/>
    </location>
    <ligand>
        <name>NADPH</name>
        <dbReference type="ChEBI" id="CHEBI:57783"/>
    </ligand>
</feature>
<feature type="binding site" evidence="1">
    <location>
        <position position="162"/>
    </location>
    <ligand>
        <name>Mn(2+)</name>
        <dbReference type="ChEBI" id="CHEBI:29035"/>
    </ligand>
</feature>
<feature type="binding site" evidence="1">
    <location>
        <position position="163"/>
    </location>
    <ligand>
        <name>1-deoxy-D-xylulose 5-phosphate</name>
        <dbReference type="ChEBI" id="CHEBI:57792"/>
    </ligand>
</feature>
<feature type="binding site" evidence="1">
    <location>
        <position position="164"/>
    </location>
    <ligand>
        <name>1-deoxy-D-xylulose 5-phosphate</name>
        <dbReference type="ChEBI" id="CHEBI:57792"/>
    </ligand>
</feature>
<feature type="binding site" evidence="1">
    <location>
        <position position="164"/>
    </location>
    <ligand>
        <name>Mn(2+)</name>
        <dbReference type="ChEBI" id="CHEBI:29035"/>
    </ligand>
</feature>
<feature type="binding site" evidence="1">
    <location>
        <position position="188"/>
    </location>
    <ligand>
        <name>1-deoxy-D-xylulose 5-phosphate</name>
        <dbReference type="ChEBI" id="CHEBI:57792"/>
    </ligand>
</feature>
<feature type="binding site" evidence="1">
    <location>
        <position position="211"/>
    </location>
    <ligand>
        <name>1-deoxy-D-xylulose 5-phosphate</name>
        <dbReference type="ChEBI" id="CHEBI:57792"/>
    </ligand>
</feature>
<feature type="binding site" evidence="1">
    <location>
        <position position="217"/>
    </location>
    <ligand>
        <name>NADPH</name>
        <dbReference type="ChEBI" id="CHEBI:57783"/>
    </ligand>
</feature>
<feature type="binding site" evidence="1">
    <location>
        <position position="224"/>
    </location>
    <ligand>
        <name>1-deoxy-D-xylulose 5-phosphate</name>
        <dbReference type="ChEBI" id="CHEBI:57792"/>
    </ligand>
</feature>
<feature type="binding site" evidence="1">
    <location>
        <position position="229"/>
    </location>
    <ligand>
        <name>1-deoxy-D-xylulose 5-phosphate</name>
        <dbReference type="ChEBI" id="CHEBI:57792"/>
    </ligand>
</feature>
<feature type="binding site" evidence="1">
    <location>
        <position position="230"/>
    </location>
    <ligand>
        <name>1-deoxy-D-xylulose 5-phosphate</name>
        <dbReference type="ChEBI" id="CHEBI:57792"/>
    </ligand>
</feature>
<feature type="binding site" evidence="1">
    <location>
        <position position="233"/>
    </location>
    <ligand>
        <name>1-deoxy-D-xylulose 5-phosphate</name>
        <dbReference type="ChEBI" id="CHEBI:57792"/>
    </ligand>
</feature>
<feature type="binding site" evidence="1">
    <location>
        <position position="233"/>
    </location>
    <ligand>
        <name>Mn(2+)</name>
        <dbReference type="ChEBI" id="CHEBI:29035"/>
    </ligand>
</feature>
<protein>
    <recommendedName>
        <fullName evidence="1">1-deoxy-D-xylulose 5-phosphate reductoisomerase</fullName>
        <shortName evidence="1">DXP reductoisomerase</shortName>
        <ecNumber evidence="1">1.1.1.267</ecNumber>
    </recommendedName>
    <alternativeName>
        <fullName evidence="1">1-deoxyxylulose-5-phosphate reductoisomerase</fullName>
    </alternativeName>
    <alternativeName>
        <fullName evidence="1">2-C-methyl-D-erythritol 4-phosphate synthase</fullName>
    </alternativeName>
</protein>
<keyword id="KW-0414">Isoprene biosynthesis</keyword>
<keyword id="KW-0464">Manganese</keyword>
<keyword id="KW-0479">Metal-binding</keyword>
<keyword id="KW-0521">NADP</keyword>
<keyword id="KW-0560">Oxidoreductase</keyword>
<keyword id="KW-1185">Reference proteome</keyword>
<proteinExistence type="inferred from homology"/>
<evidence type="ECO:0000255" key="1">
    <source>
        <dbReference type="HAMAP-Rule" id="MF_00183"/>
    </source>
</evidence>
<organism>
    <name type="scientific">Bradyrhizobium diazoefficiens (strain JCM 10833 / BCRC 13528 / IAM 13628 / NBRC 14792 / USDA 110)</name>
    <dbReference type="NCBI Taxonomy" id="224911"/>
    <lineage>
        <taxon>Bacteria</taxon>
        <taxon>Pseudomonadati</taxon>
        <taxon>Pseudomonadota</taxon>
        <taxon>Alphaproteobacteria</taxon>
        <taxon>Hyphomicrobiales</taxon>
        <taxon>Nitrobacteraceae</taxon>
        <taxon>Bradyrhizobium</taxon>
    </lineage>
</organism>
<sequence>MSAVPLRNNKAAASAVRSVTVLGATGSIGDSTMDLLRASPERYRVEALTANGNVEALAKLAKEFSARFVAIADTSKFAELKAALAGTSTECGAGESAVIEAGARPADWVMAAVSGAAGLKPALAAVDRGAHVALANKECLVCAGDFFMQRAAKAGACILPADSEHNALFQALGSGNRDELVRVIITASGGPFRTWKPADIEQATLAQALKHPNWSMGQKITIDSASMMNKGLEVIEASYLFALSPDEIDVLVHPQSIIHGMVEFSDRSVVAQLGSPDMRTPIAHCLGWPDRIKGPAAKLDLAKIGQLTFEAPDFERFPGLRLAYDSLRTGKGATTVYNAANEVAVAAFIAGKIRFGAIARLVEATLEDWIRGGNQTPLTSADDAISVDHVARNRAAALLPQIALKAS</sequence>
<reference key="1">
    <citation type="journal article" date="2002" name="DNA Res.">
        <title>Complete genomic sequence of nitrogen-fixing symbiotic bacterium Bradyrhizobium japonicum USDA110.</title>
        <authorList>
            <person name="Kaneko T."/>
            <person name="Nakamura Y."/>
            <person name="Sato S."/>
            <person name="Minamisawa K."/>
            <person name="Uchiumi T."/>
            <person name="Sasamoto S."/>
            <person name="Watanabe A."/>
            <person name="Idesawa K."/>
            <person name="Iriguchi M."/>
            <person name="Kawashima K."/>
            <person name="Kohara M."/>
            <person name="Matsumoto M."/>
            <person name="Shimpo S."/>
            <person name="Tsuruoka H."/>
            <person name="Wada T."/>
            <person name="Yamada M."/>
            <person name="Tabata S."/>
        </authorList>
    </citation>
    <scope>NUCLEOTIDE SEQUENCE [LARGE SCALE GENOMIC DNA]</scope>
    <source>
        <strain>JCM 10833 / BCRC 13528 / IAM 13628 / NBRC 14792 / USDA 110</strain>
    </source>
</reference>
<dbReference type="EC" id="1.1.1.267" evidence="1"/>
<dbReference type="EMBL" id="BA000040">
    <property type="protein sequence ID" value="BAC50120.1"/>
    <property type="molecule type" value="Genomic_DNA"/>
</dbReference>
<dbReference type="RefSeq" id="NP_771495.1">
    <property type="nucleotide sequence ID" value="NC_004463.1"/>
</dbReference>
<dbReference type="RefSeq" id="WP_011087623.1">
    <property type="nucleotide sequence ID" value="NC_004463.1"/>
</dbReference>
<dbReference type="SMR" id="Q89KP9"/>
<dbReference type="FunCoup" id="Q89KP9">
    <property type="interactions" value="421"/>
</dbReference>
<dbReference type="STRING" id="224911.AAV28_21585"/>
<dbReference type="EnsemblBacteria" id="BAC50120">
    <property type="protein sequence ID" value="BAC50120"/>
    <property type="gene ID" value="BAC50120"/>
</dbReference>
<dbReference type="GeneID" id="46491858"/>
<dbReference type="KEGG" id="bja:bll4855"/>
<dbReference type="PATRIC" id="fig|224911.44.peg.4700"/>
<dbReference type="eggNOG" id="COG0743">
    <property type="taxonomic scope" value="Bacteria"/>
</dbReference>
<dbReference type="HOGENOM" id="CLU_035714_4_0_5"/>
<dbReference type="InParanoid" id="Q89KP9"/>
<dbReference type="OrthoDB" id="9806546at2"/>
<dbReference type="PhylomeDB" id="Q89KP9"/>
<dbReference type="UniPathway" id="UPA00056">
    <property type="reaction ID" value="UER00092"/>
</dbReference>
<dbReference type="Proteomes" id="UP000002526">
    <property type="component" value="Chromosome"/>
</dbReference>
<dbReference type="GO" id="GO:0030604">
    <property type="term" value="F:1-deoxy-D-xylulose-5-phosphate reductoisomerase activity"/>
    <property type="evidence" value="ECO:0000318"/>
    <property type="project" value="GO_Central"/>
</dbReference>
<dbReference type="GO" id="GO:0030145">
    <property type="term" value="F:manganese ion binding"/>
    <property type="evidence" value="ECO:0000318"/>
    <property type="project" value="GO_Central"/>
</dbReference>
<dbReference type="GO" id="GO:0070402">
    <property type="term" value="F:NADPH binding"/>
    <property type="evidence" value="ECO:0000318"/>
    <property type="project" value="GO_Central"/>
</dbReference>
<dbReference type="GO" id="GO:0051484">
    <property type="term" value="P:isopentenyl diphosphate biosynthetic process, methylerythritol 4-phosphate pathway involved in terpenoid biosynthetic process"/>
    <property type="evidence" value="ECO:0000318"/>
    <property type="project" value="GO_Central"/>
</dbReference>
<dbReference type="FunFam" id="3.40.50.720:FF:000045">
    <property type="entry name" value="1-deoxy-D-xylulose 5-phosphate reductoisomerase"/>
    <property type="match status" value="1"/>
</dbReference>
<dbReference type="Gene3D" id="1.10.1740.10">
    <property type="match status" value="1"/>
</dbReference>
<dbReference type="Gene3D" id="3.40.50.720">
    <property type="entry name" value="NAD(P)-binding Rossmann-like Domain"/>
    <property type="match status" value="1"/>
</dbReference>
<dbReference type="HAMAP" id="MF_00183">
    <property type="entry name" value="DXP_reductoisom"/>
    <property type="match status" value="1"/>
</dbReference>
<dbReference type="InterPro" id="IPR003821">
    <property type="entry name" value="DXP_reductoisomerase"/>
</dbReference>
<dbReference type="InterPro" id="IPR013644">
    <property type="entry name" value="DXP_reductoisomerase_C"/>
</dbReference>
<dbReference type="InterPro" id="IPR013512">
    <property type="entry name" value="DXP_reductoisomerase_N"/>
</dbReference>
<dbReference type="InterPro" id="IPR026877">
    <property type="entry name" value="DXPR_C"/>
</dbReference>
<dbReference type="InterPro" id="IPR036169">
    <property type="entry name" value="DXPR_C_sf"/>
</dbReference>
<dbReference type="InterPro" id="IPR036291">
    <property type="entry name" value="NAD(P)-bd_dom_sf"/>
</dbReference>
<dbReference type="NCBIfam" id="TIGR00243">
    <property type="entry name" value="Dxr"/>
    <property type="match status" value="1"/>
</dbReference>
<dbReference type="PANTHER" id="PTHR30525">
    <property type="entry name" value="1-DEOXY-D-XYLULOSE 5-PHOSPHATE REDUCTOISOMERASE"/>
    <property type="match status" value="1"/>
</dbReference>
<dbReference type="PANTHER" id="PTHR30525:SF0">
    <property type="entry name" value="1-DEOXY-D-XYLULOSE 5-PHOSPHATE REDUCTOISOMERASE, CHLOROPLASTIC"/>
    <property type="match status" value="1"/>
</dbReference>
<dbReference type="Pfam" id="PF08436">
    <property type="entry name" value="DXP_redisom_C"/>
    <property type="match status" value="1"/>
</dbReference>
<dbReference type="Pfam" id="PF02670">
    <property type="entry name" value="DXP_reductoisom"/>
    <property type="match status" value="1"/>
</dbReference>
<dbReference type="Pfam" id="PF13288">
    <property type="entry name" value="DXPR_C"/>
    <property type="match status" value="1"/>
</dbReference>
<dbReference type="PIRSF" id="PIRSF006205">
    <property type="entry name" value="Dxp_reductismrs"/>
    <property type="match status" value="1"/>
</dbReference>
<dbReference type="SUPFAM" id="SSF69055">
    <property type="entry name" value="1-deoxy-D-xylulose-5-phosphate reductoisomerase, C-terminal domain"/>
    <property type="match status" value="1"/>
</dbReference>
<dbReference type="SUPFAM" id="SSF55347">
    <property type="entry name" value="Glyceraldehyde-3-phosphate dehydrogenase-like, C-terminal domain"/>
    <property type="match status" value="1"/>
</dbReference>
<dbReference type="SUPFAM" id="SSF51735">
    <property type="entry name" value="NAD(P)-binding Rossmann-fold domains"/>
    <property type="match status" value="1"/>
</dbReference>